<comment type="function">
    <text evidence="1">Catalyzes the cleavage of 5-oxoproline to form L-glutamate coupled to the hydrolysis of ATP to ADP and inorganic phosphate.</text>
</comment>
<comment type="catalytic activity">
    <reaction evidence="1">
        <text>5-oxo-L-proline + ATP + 2 H2O = L-glutamate + ADP + phosphate + H(+)</text>
        <dbReference type="Rhea" id="RHEA:10348"/>
        <dbReference type="ChEBI" id="CHEBI:15377"/>
        <dbReference type="ChEBI" id="CHEBI:15378"/>
        <dbReference type="ChEBI" id="CHEBI:29985"/>
        <dbReference type="ChEBI" id="CHEBI:30616"/>
        <dbReference type="ChEBI" id="CHEBI:43474"/>
        <dbReference type="ChEBI" id="CHEBI:58402"/>
        <dbReference type="ChEBI" id="CHEBI:456216"/>
        <dbReference type="EC" id="3.5.2.9"/>
    </reaction>
</comment>
<comment type="subunit">
    <text evidence="1">Forms a complex composed of PxpA, PxpB and PxpC.</text>
</comment>
<comment type="similarity">
    <text evidence="1">Belongs to the LamB/PxpA family.</text>
</comment>
<evidence type="ECO:0000255" key="1">
    <source>
        <dbReference type="HAMAP-Rule" id="MF_00691"/>
    </source>
</evidence>
<feature type="chain" id="PRO_1000045193" description="5-oxoprolinase subunit A">
    <location>
        <begin position="1"/>
        <end position="254"/>
    </location>
</feature>
<gene>
    <name evidence="1" type="primary">pxpA</name>
    <name type="ordered locus">BTH_I0228</name>
</gene>
<protein>
    <recommendedName>
        <fullName evidence="1">5-oxoprolinase subunit A</fullName>
        <shortName evidence="1">5-OPase subunit A</shortName>
        <ecNumber evidence="1">3.5.2.9</ecNumber>
    </recommendedName>
    <alternativeName>
        <fullName evidence="1">5-oxoprolinase (ATP-hydrolyzing) subunit A</fullName>
    </alternativeName>
</protein>
<dbReference type="EC" id="3.5.2.9" evidence="1"/>
<dbReference type="EMBL" id="CP000086">
    <property type="protein sequence ID" value="ABC39152.1"/>
    <property type="molecule type" value="Genomic_DNA"/>
</dbReference>
<dbReference type="RefSeq" id="WP_009893463.1">
    <property type="nucleotide sequence ID" value="NZ_CP008785.1"/>
</dbReference>
<dbReference type="SMR" id="Q2T213"/>
<dbReference type="GeneID" id="45119999"/>
<dbReference type="KEGG" id="bte:BTH_I0228"/>
<dbReference type="HOGENOM" id="CLU_069535_0_0_4"/>
<dbReference type="Proteomes" id="UP000001930">
    <property type="component" value="Chromosome I"/>
</dbReference>
<dbReference type="GO" id="GO:0017168">
    <property type="term" value="F:5-oxoprolinase (ATP-hydrolyzing) activity"/>
    <property type="evidence" value="ECO:0007669"/>
    <property type="project" value="UniProtKB-UniRule"/>
</dbReference>
<dbReference type="GO" id="GO:0005524">
    <property type="term" value="F:ATP binding"/>
    <property type="evidence" value="ECO:0007669"/>
    <property type="project" value="UniProtKB-UniRule"/>
</dbReference>
<dbReference type="GO" id="GO:0005975">
    <property type="term" value="P:carbohydrate metabolic process"/>
    <property type="evidence" value="ECO:0007669"/>
    <property type="project" value="InterPro"/>
</dbReference>
<dbReference type="CDD" id="cd10800">
    <property type="entry name" value="LamB_YcsF_YbgL_like"/>
    <property type="match status" value="1"/>
</dbReference>
<dbReference type="Gene3D" id="3.20.20.370">
    <property type="entry name" value="Glycoside hydrolase/deacetylase"/>
    <property type="match status" value="1"/>
</dbReference>
<dbReference type="HAMAP" id="MF_00691">
    <property type="entry name" value="PxpA"/>
    <property type="match status" value="1"/>
</dbReference>
<dbReference type="InterPro" id="IPR011330">
    <property type="entry name" value="Glyco_hydro/deAcase_b/a-brl"/>
</dbReference>
<dbReference type="InterPro" id="IPR005501">
    <property type="entry name" value="LamB/YcsF/PxpA-like"/>
</dbReference>
<dbReference type="NCBIfam" id="NF003814">
    <property type="entry name" value="PRK05406.1-3"/>
    <property type="match status" value="1"/>
</dbReference>
<dbReference type="NCBIfam" id="NF003815">
    <property type="entry name" value="PRK05406.1-4"/>
    <property type="match status" value="1"/>
</dbReference>
<dbReference type="NCBIfam" id="NF003816">
    <property type="entry name" value="PRK05406.1-5"/>
    <property type="match status" value="1"/>
</dbReference>
<dbReference type="PANTHER" id="PTHR30292:SF0">
    <property type="entry name" value="5-OXOPROLINASE SUBUNIT A"/>
    <property type="match status" value="1"/>
</dbReference>
<dbReference type="PANTHER" id="PTHR30292">
    <property type="entry name" value="UNCHARACTERIZED PROTEIN YBGL-RELATED"/>
    <property type="match status" value="1"/>
</dbReference>
<dbReference type="Pfam" id="PF03746">
    <property type="entry name" value="LamB_YcsF"/>
    <property type="match status" value="1"/>
</dbReference>
<dbReference type="SUPFAM" id="SSF88713">
    <property type="entry name" value="Glycoside hydrolase/deacetylase"/>
    <property type="match status" value="1"/>
</dbReference>
<name>PXPA_BURTA</name>
<reference key="1">
    <citation type="journal article" date="2005" name="BMC Genomics">
        <title>Bacterial genome adaptation to niches: divergence of the potential virulence genes in three Burkholderia species of different survival strategies.</title>
        <authorList>
            <person name="Kim H.S."/>
            <person name="Schell M.A."/>
            <person name="Yu Y."/>
            <person name="Ulrich R.L."/>
            <person name="Sarria S.H."/>
            <person name="Nierman W.C."/>
            <person name="DeShazer D."/>
        </authorList>
    </citation>
    <scope>NUCLEOTIDE SEQUENCE [LARGE SCALE GENOMIC DNA]</scope>
    <source>
        <strain>ATCC 700388 / DSM 13276 / CCUG 48851 / CIP 106301 / E264</strain>
    </source>
</reference>
<proteinExistence type="inferred from homology"/>
<organism>
    <name type="scientific">Burkholderia thailandensis (strain ATCC 700388 / DSM 13276 / CCUG 48851 / CIP 106301 / E264)</name>
    <dbReference type="NCBI Taxonomy" id="271848"/>
    <lineage>
        <taxon>Bacteria</taxon>
        <taxon>Pseudomonadati</taxon>
        <taxon>Pseudomonadota</taxon>
        <taxon>Betaproteobacteria</taxon>
        <taxon>Burkholderiales</taxon>
        <taxon>Burkholderiaceae</taxon>
        <taxon>Burkholderia</taxon>
        <taxon>pseudomallei group</taxon>
    </lineage>
</organism>
<sequence length="254" mass="26699">MEIDLNADLGEGCGSDEALLDLVTSANIACGWHAGGAPAMRDCVRWAVEKGVSIGAHPSFHDPENFGRKEMDLPASEIYAGVLYQLGALSAIAQAEGGRIAHVKPHGALYNQAARDAEIADAVVSAIHDFDPSLAVFGLASSGFVDAARHAGLVAVEEVFADRGYRADGSLVPRSQPGALVDDEREMLARTLEMVRGQRVRAVTGEWVPLNAQTVCLHGDGPHALAFAKRIREALEAAGIDVHAPGALHAGERA</sequence>
<keyword id="KW-0067">ATP-binding</keyword>
<keyword id="KW-0378">Hydrolase</keyword>
<keyword id="KW-0547">Nucleotide-binding</keyword>
<accession>Q2T213</accession>